<keyword id="KW-0067">ATP-binding</keyword>
<keyword id="KW-0436">Ligase</keyword>
<keyword id="KW-0547">Nucleotide-binding</keyword>
<keyword id="KW-0648">Protein biosynthesis</keyword>
<keyword id="KW-1185">Reference proteome</keyword>
<evidence type="ECO:0000255" key="1">
    <source>
        <dbReference type="HAMAP-Rule" id="MF_00121"/>
    </source>
</evidence>
<evidence type="ECO:0000305" key="2"/>
<gene>
    <name evidence="1" type="primary">gatB</name>
    <name type="ordered locus">FTL_1841</name>
</gene>
<dbReference type="EC" id="6.3.5.-" evidence="1"/>
<dbReference type="EMBL" id="AM233362">
    <property type="protein sequence ID" value="CAJ80280.1"/>
    <property type="status" value="ALT_INIT"/>
    <property type="molecule type" value="Genomic_DNA"/>
</dbReference>
<dbReference type="RefSeq" id="WP_003017411.1">
    <property type="nucleotide sequence ID" value="NZ_CP009694.1"/>
</dbReference>
<dbReference type="SMR" id="Q2A1D9"/>
<dbReference type="KEGG" id="ftl:FTL_1841"/>
<dbReference type="Proteomes" id="UP000001944">
    <property type="component" value="Chromosome"/>
</dbReference>
<dbReference type="GO" id="GO:0050566">
    <property type="term" value="F:asparaginyl-tRNA synthase (glutamine-hydrolyzing) activity"/>
    <property type="evidence" value="ECO:0007669"/>
    <property type="project" value="RHEA"/>
</dbReference>
<dbReference type="GO" id="GO:0005524">
    <property type="term" value="F:ATP binding"/>
    <property type="evidence" value="ECO:0007669"/>
    <property type="project" value="UniProtKB-KW"/>
</dbReference>
<dbReference type="GO" id="GO:0050567">
    <property type="term" value="F:glutaminyl-tRNA synthase (glutamine-hydrolyzing) activity"/>
    <property type="evidence" value="ECO:0007669"/>
    <property type="project" value="UniProtKB-UniRule"/>
</dbReference>
<dbReference type="GO" id="GO:0070681">
    <property type="term" value="P:glutaminyl-tRNAGln biosynthesis via transamidation"/>
    <property type="evidence" value="ECO:0007669"/>
    <property type="project" value="TreeGrafter"/>
</dbReference>
<dbReference type="GO" id="GO:0006412">
    <property type="term" value="P:translation"/>
    <property type="evidence" value="ECO:0007669"/>
    <property type="project" value="UniProtKB-UniRule"/>
</dbReference>
<dbReference type="FunFam" id="1.10.10.410:FF:000001">
    <property type="entry name" value="Aspartyl/glutamyl-tRNA(Asn/Gln) amidotransferase subunit B"/>
    <property type="match status" value="1"/>
</dbReference>
<dbReference type="Gene3D" id="1.10.10.410">
    <property type="match status" value="1"/>
</dbReference>
<dbReference type="HAMAP" id="MF_00121">
    <property type="entry name" value="GatB"/>
    <property type="match status" value="1"/>
</dbReference>
<dbReference type="InterPro" id="IPR017959">
    <property type="entry name" value="Asn/Gln-tRNA_amidoTrfase_suB/E"/>
</dbReference>
<dbReference type="InterPro" id="IPR006075">
    <property type="entry name" value="Asn/Gln-tRNA_Trfase_suB/E_cat"/>
</dbReference>
<dbReference type="InterPro" id="IPR018027">
    <property type="entry name" value="Asn/Gln_amidotransferase"/>
</dbReference>
<dbReference type="InterPro" id="IPR003789">
    <property type="entry name" value="Asn/Gln_tRNA_amidoTrase-B-like"/>
</dbReference>
<dbReference type="InterPro" id="IPR004413">
    <property type="entry name" value="GatB"/>
</dbReference>
<dbReference type="InterPro" id="IPR023168">
    <property type="entry name" value="GatB_Yqey_C_2"/>
</dbReference>
<dbReference type="InterPro" id="IPR017958">
    <property type="entry name" value="Gln-tRNA_amidoTrfase_suB_CS"/>
</dbReference>
<dbReference type="InterPro" id="IPR014746">
    <property type="entry name" value="Gln_synth/guanido_kin_cat_dom"/>
</dbReference>
<dbReference type="NCBIfam" id="TIGR00133">
    <property type="entry name" value="gatB"/>
    <property type="match status" value="1"/>
</dbReference>
<dbReference type="NCBIfam" id="NF004012">
    <property type="entry name" value="PRK05477.1-2"/>
    <property type="match status" value="1"/>
</dbReference>
<dbReference type="NCBIfam" id="NF004014">
    <property type="entry name" value="PRK05477.1-4"/>
    <property type="match status" value="1"/>
</dbReference>
<dbReference type="PANTHER" id="PTHR11659">
    <property type="entry name" value="GLUTAMYL-TRNA GLN AMIDOTRANSFERASE SUBUNIT B MITOCHONDRIAL AND PROKARYOTIC PET112-RELATED"/>
    <property type="match status" value="1"/>
</dbReference>
<dbReference type="PANTHER" id="PTHR11659:SF0">
    <property type="entry name" value="GLUTAMYL-TRNA(GLN) AMIDOTRANSFERASE SUBUNIT B, MITOCHONDRIAL"/>
    <property type="match status" value="1"/>
</dbReference>
<dbReference type="Pfam" id="PF02934">
    <property type="entry name" value="GatB_N"/>
    <property type="match status" value="1"/>
</dbReference>
<dbReference type="Pfam" id="PF02637">
    <property type="entry name" value="GatB_Yqey"/>
    <property type="match status" value="1"/>
</dbReference>
<dbReference type="SMART" id="SM00845">
    <property type="entry name" value="GatB_Yqey"/>
    <property type="match status" value="1"/>
</dbReference>
<dbReference type="SUPFAM" id="SSF89095">
    <property type="entry name" value="GatB/YqeY motif"/>
    <property type="match status" value="1"/>
</dbReference>
<dbReference type="SUPFAM" id="SSF55931">
    <property type="entry name" value="Glutamine synthetase/guanido kinase"/>
    <property type="match status" value="1"/>
</dbReference>
<dbReference type="PROSITE" id="PS01234">
    <property type="entry name" value="GATB"/>
    <property type="match status" value="1"/>
</dbReference>
<organism>
    <name type="scientific">Francisella tularensis subsp. holarctica (strain LVS)</name>
    <dbReference type="NCBI Taxonomy" id="376619"/>
    <lineage>
        <taxon>Bacteria</taxon>
        <taxon>Pseudomonadati</taxon>
        <taxon>Pseudomonadota</taxon>
        <taxon>Gammaproteobacteria</taxon>
        <taxon>Thiotrichales</taxon>
        <taxon>Francisellaceae</taxon>
        <taxon>Francisella</taxon>
    </lineage>
</organism>
<accession>Q2A1D9</accession>
<comment type="function">
    <text evidence="1">Allows the formation of correctly charged Asn-tRNA(Asn) or Gln-tRNA(Gln) through the transamidation of misacylated Asp-tRNA(Asn) or Glu-tRNA(Gln) in organisms which lack either or both of asparaginyl-tRNA or glutaminyl-tRNA synthetases. The reaction takes place in the presence of glutamine and ATP through an activated phospho-Asp-tRNA(Asn) or phospho-Glu-tRNA(Gln).</text>
</comment>
<comment type="catalytic activity">
    <reaction evidence="1">
        <text>L-glutamyl-tRNA(Gln) + L-glutamine + ATP + H2O = L-glutaminyl-tRNA(Gln) + L-glutamate + ADP + phosphate + H(+)</text>
        <dbReference type="Rhea" id="RHEA:17521"/>
        <dbReference type="Rhea" id="RHEA-COMP:9681"/>
        <dbReference type="Rhea" id="RHEA-COMP:9684"/>
        <dbReference type="ChEBI" id="CHEBI:15377"/>
        <dbReference type="ChEBI" id="CHEBI:15378"/>
        <dbReference type="ChEBI" id="CHEBI:29985"/>
        <dbReference type="ChEBI" id="CHEBI:30616"/>
        <dbReference type="ChEBI" id="CHEBI:43474"/>
        <dbReference type="ChEBI" id="CHEBI:58359"/>
        <dbReference type="ChEBI" id="CHEBI:78520"/>
        <dbReference type="ChEBI" id="CHEBI:78521"/>
        <dbReference type="ChEBI" id="CHEBI:456216"/>
    </reaction>
</comment>
<comment type="catalytic activity">
    <reaction evidence="1">
        <text>L-aspartyl-tRNA(Asn) + L-glutamine + ATP + H2O = L-asparaginyl-tRNA(Asn) + L-glutamate + ADP + phosphate + 2 H(+)</text>
        <dbReference type="Rhea" id="RHEA:14513"/>
        <dbReference type="Rhea" id="RHEA-COMP:9674"/>
        <dbReference type="Rhea" id="RHEA-COMP:9677"/>
        <dbReference type="ChEBI" id="CHEBI:15377"/>
        <dbReference type="ChEBI" id="CHEBI:15378"/>
        <dbReference type="ChEBI" id="CHEBI:29985"/>
        <dbReference type="ChEBI" id="CHEBI:30616"/>
        <dbReference type="ChEBI" id="CHEBI:43474"/>
        <dbReference type="ChEBI" id="CHEBI:58359"/>
        <dbReference type="ChEBI" id="CHEBI:78515"/>
        <dbReference type="ChEBI" id="CHEBI:78516"/>
        <dbReference type="ChEBI" id="CHEBI:456216"/>
    </reaction>
</comment>
<comment type="subunit">
    <text evidence="1">Heterotrimer of A, B and C subunits.</text>
</comment>
<comment type="similarity">
    <text evidence="1">Belongs to the GatB/GatE family. GatB subfamily.</text>
</comment>
<comment type="sequence caution" evidence="2">
    <conflict type="erroneous initiation">
        <sequence resource="EMBL-CDS" id="CAJ80280"/>
    </conflict>
</comment>
<sequence length="473" mass="53093">MNWEMVIGLEVHIQLSTKSKLFSTSATKYGQHQNTQAAFLDLGLPGTLPVVNKEAIRKAVIFGLAVDAKISKDSFFARKNYFYPDLSKGYQISQSTNPIVQEGRLEIETSKGLKTIRIERAHLEEDAGKSVHGYIAGETGLDYNRAGTPLLEIVTYPDFRSAEEVVAYLKKLHQLVKHLGICDGNMQEGSFRCDVNLSIRPQGQAKFGTRAELKNINSFRFIDKAIEYEYARQVSVLESGGEVVQETRLYDADANETRSMRAKEDAFDYRYFPDPDLLPLVITDEYIESIKKQMPLKSEEREAVYREHLAEQEVEFLLSNLEIADYYDKVAVVIGYKPAYNWITVDLISTLNRAEKEFSSDVVPAEILLEIIANVQKDIISQANAKKVIAEYIDAPSAIEAIIEKLGLKQVSDEGMIRELVQGIIAANPQQAADFKAGKTKLMSFFVGQAMKASKGKANPKQVNQIVQEELNK</sequence>
<feature type="chain" id="PRO_0000241223" description="Aspartyl/glutamyl-tRNA(Asn/Gln) amidotransferase subunit B">
    <location>
        <begin position="1"/>
        <end position="473"/>
    </location>
</feature>
<proteinExistence type="inferred from homology"/>
<reference key="1">
    <citation type="submission" date="2006-03" db="EMBL/GenBank/DDBJ databases">
        <title>Complete genome sequence of Francisella tularensis LVS (Live Vaccine Strain).</title>
        <authorList>
            <person name="Chain P."/>
            <person name="Larimer F."/>
            <person name="Land M."/>
            <person name="Stilwagen S."/>
            <person name="Larsson P."/>
            <person name="Bearden S."/>
            <person name="Chu M."/>
            <person name="Oyston P."/>
            <person name="Forsman M."/>
            <person name="Andersson S."/>
            <person name="Lindler L."/>
            <person name="Titball R."/>
            <person name="Garcia E."/>
        </authorList>
    </citation>
    <scope>NUCLEOTIDE SEQUENCE [LARGE SCALE GENOMIC DNA]</scope>
    <source>
        <strain>LVS</strain>
    </source>
</reference>
<name>GATB_FRATH</name>
<protein>
    <recommendedName>
        <fullName evidence="1">Aspartyl/glutamyl-tRNA(Asn/Gln) amidotransferase subunit B</fullName>
        <shortName evidence="1">Asp/Glu-ADT subunit B</shortName>
        <ecNumber evidence="1">6.3.5.-</ecNumber>
    </recommendedName>
</protein>